<name>FCSD2_MOUSE</name>
<feature type="chain" id="PRO_0000278215" description="F-BAR and double SH3 domains protein 2">
    <location>
        <begin position="1"/>
        <end position="740"/>
    </location>
</feature>
<feature type="domain" description="F-BAR" evidence="4">
    <location>
        <begin position="8"/>
        <end position="282"/>
    </location>
</feature>
<feature type="domain" description="SH3 1" evidence="3">
    <location>
        <begin position="469"/>
        <end position="530"/>
    </location>
</feature>
<feature type="domain" description="SH3 2" evidence="3">
    <location>
        <begin position="567"/>
        <end position="629"/>
    </location>
</feature>
<feature type="region of interest" description="Disordered" evidence="5">
    <location>
        <begin position="303"/>
        <end position="323"/>
    </location>
</feature>
<feature type="region of interest" description="Required and sufficient for location at clathrin-coated pits" evidence="1">
    <location>
        <begin position="567"/>
        <end position="629"/>
    </location>
</feature>
<feature type="region of interest" description="Disordered" evidence="5">
    <location>
        <begin position="629"/>
        <end position="740"/>
    </location>
</feature>
<feature type="coiled-coil region" evidence="2">
    <location>
        <begin position="356"/>
        <end position="397"/>
    </location>
</feature>
<feature type="compositionally biased region" description="Basic and acidic residues" evidence="5">
    <location>
        <begin position="307"/>
        <end position="323"/>
    </location>
</feature>
<feature type="compositionally biased region" description="Polar residues" evidence="5">
    <location>
        <begin position="629"/>
        <end position="645"/>
    </location>
</feature>
<feature type="compositionally biased region" description="Pro residues" evidence="5">
    <location>
        <begin position="646"/>
        <end position="657"/>
    </location>
</feature>
<feature type="compositionally biased region" description="Polar residues" evidence="5">
    <location>
        <begin position="675"/>
        <end position="706"/>
    </location>
</feature>
<feature type="modified residue" description="Phosphoserine" evidence="1">
    <location>
        <position position="675"/>
    </location>
</feature>
<feature type="modified residue" description="Phosphoserine" evidence="1">
    <location>
        <position position="681"/>
    </location>
</feature>
<feature type="splice variant" id="VSP_023170" description="In isoform 3." evidence="12">
    <location>
        <begin position="1"/>
        <end position="38"/>
    </location>
</feature>
<feature type="splice variant" id="VSP_023171" description="In isoform 2 and isoform 3." evidence="11 12">
    <original>T</original>
    <variation>TSLKAAQLVDIELSPVSALRMTIAE</variation>
    <location>
        <position position="308"/>
    </location>
</feature>
<feature type="sequence conflict" description="In Ref. 2; BAE24333." evidence="15" ref="2">
    <original>N</original>
    <variation>D</variation>
    <location>
        <position position="350"/>
    </location>
</feature>
<feature type="strand" evidence="18">
    <location>
        <begin position="737"/>
        <end position="739"/>
    </location>
</feature>
<sequence>MQPPPRKVKVTQELRNIQGEQMTKLQAKHQAECDLLEDMRTFSQKKAAIEREYAQGIQKLASQYLKRDWPGIKTDDRNDYRSMYPVWKSFLEGTMQVAQSRINICENYKNFISEPARAVRSLKEQQLKRCVDQLTKIQTELQETVKDLVKGKKKYFETEQMAHAVREKADIEAKSKLSLFQSRISLQKASVKLKARRSECNTKATHARNDYLLTLAAANAHQDRYYQTDLVNIMKALDGNVYDHLKDYLIAFSRTELETCQAIQNTFQFLLENSSKVVRDYNLQLFLQENAVFHKPQPFQFQPCDSDTSRQLESETGTTEEHSLNKEARKWATRVAREHKNIVHQQRVLNELECHGVALSEQSRAELEQKIDEARESIRKAEIIKLKAEARLDLLKQIGVSVDTWLKSAMNQVMEELENERWARPPAVTSNGTLHSLNADAEREEGEEFEDNMDVFDDSSSSPSGTLRNYPLTCKVVYSYKASQPDELTIEEHEVLEVIEDGDMEDWVKARNKVGQVGYVPEKYLQFPTSNSLLSMLQSLAALDSRSHTSSNSTEAELVSGSLNGDASVCFVKALYDYEGQTDDELSFPEGAIIRILNKENQDDDGFWEGEFSGRIGVFPSVLVEELSASENGDTPWTREIQISPSPKPHTSLPPLPLYDQPPSSPYPSPDKRSSQFFPRSPSANENSLHAESPGFSQASRQTPDTSYGKLRPVRAAPPPPTQNHRRTTEKMEDVEITLV</sequence>
<keyword id="KW-0002">3D-structure</keyword>
<keyword id="KW-0025">Alternative splicing</keyword>
<keyword id="KW-0965">Cell junction</keyword>
<keyword id="KW-1003">Cell membrane</keyword>
<keyword id="KW-0966">Cell projection</keyword>
<keyword id="KW-0168">Coated pit</keyword>
<keyword id="KW-0175">Coiled coil</keyword>
<keyword id="KW-0963">Cytoplasm</keyword>
<keyword id="KW-0254">Endocytosis</keyword>
<keyword id="KW-0446">Lipid-binding</keyword>
<keyword id="KW-0472">Membrane</keyword>
<keyword id="KW-0597">Phosphoprotein</keyword>
<keyword id="KW-0653">Protein transport</keyword>
<keyword id="KW-1185">Reference proteome</keyword>
<keyword id="KW-0677">Repeat</keyword>
<keyword id="KW-0728">SH3 domain</keyword>
<keyword id="KW-0813">Transport</keyword>
<protein>
    <recommendedName>
        <fullName>F-BAR and double SH3 domains protein 2</fullName>
    </recommendedName>
    <alternativeName>
        <fullName evidence="13 14">Protein nervous wreck 1</fullName>
        <shortName evidence="13 14">NWK1</shortName>
    </alternativeName>
    <alternativeName>
        <fullName>SH3 multiple domains protein 3</fullName>
    </alternativeName>
</protein>
<proteinExistence type="evidence at protein level"/>
<dbReference type="EMBL" id="AK122368">
    <property type="protein sequence ID" value="BAC65650.1"/>
    <property type="status" value="ALT_INIT"/>
    <property type="molecule type" value="mRNA"/>
</dbReference>
<dbReference type="EMBL" id="AK140322">
    <property type="protein sequence ID" value="BAE24333.1"/>
    <property type="molecule type" value="mRNA"/>
</dbReference>
<dbReference type="EMBL" id="AK141949">
    <property type="protein sequence ID" value="BAE24896.1"/>
    <property type="molecule type" value="mRNA"/>
</dbReference>
<dbReference type="EMBL" id="BC060647">
    <property type="protein sequence ID" value="AAH60647.1"/>
    <property type="molecule type" value="mRNA"/>
</dbReference>
<dbReference type="CCDS" id="CCDS52327.1">
    <molecule id="Q3USJ8-2"/>
</dbReference>
<dbReference type="CCDS" id="CCDS52328.1">
    <molecule id="Q3USJ8-1"/>
</dbReference>
<dbReference type="RefSeq" id="NP_001139482.1">
    <molecule id="Q3USJ8-1"/>
    <property type="nucleotide sequence ID" value="NM_001146010.2"/>
</dbReference>
<dbReference type="RefSeq" id="NP_950177.2">
    <molecule id="Q3USJ8-2"/>
    <property type="nucleotide sequence ID" value="NM_199012.3"/>
</dbReference>
<dbReference type="PDB" id="7WEG">
    <property type="method" value="X-ray"/>
    <property type="resolution" value="2.00 A"/>
    <property type="chains" value="C/D=728-740"/>
</dbReference>
<dbReference type="PDBsum" id="7WEG"/>
<dbReference type="SMR" id="Q3USJ8"/>
<dbReference type="BioGRID" id="228891">
    <property type="interactions" value="2"/>
</dbReference>
<dbReference type="FunCoup" id="Q3USJ8">
    <property type="interactions" value="2276"/>
</dbReference>
<dbReference type="STRING" id="10090.ENSMUSP00000032931"/>
<dbReference type="GlyGen" id="Q3USJ8">
    <property type="glycosylation" value="4 sites, 1 O-linked glycan (4 sites)"/>
</dbReference>
<dbReference type="iPTMnet" id="Q3USJ8"/>
<dbReference type="PhosphoSitePlus" id="Q3USJ8"/>
<dbReference type="jPOST" id="Q3USJ8"/>
<dbReference type="PaxDb" id="10090-ENSMUSP00000032931"/>
<dbReference type="PeptideAtlas" id="Q3USJ8"/>
<dbReference type="ProteomicsDB" id="270978">
    <molecule id="Q3USJ8-1"/>
</dbReference>
<dbReference type="ProteomicsDB" id="270979">
    <molecule id="Q3USJ8-2"/>
</dbReference>
<dbReference type="ProteomicsDB" id="270980">
    <molecule id="Q3USJ8-3"/>
</dbReference>
<dbReference type="Pumba" id="Q3USJ8"/>
<dbReference type="Antibodypedia" id="49955">
    <property type="antibodies" value="95 antibodies from 19 providers"/>
</dbReference>
<dbReference type="DNASU" id="207278"/>
<dbReference type="Ensembl" id="ENSMUST00000032931.9">
    <molecule id="Q3USJ8-2"/>
    <property type="protein sequence ID" value="ENSMUSP00000032931.8"/>
    <property type="gene ID" value="ENSMUSG00000030691.16"/>
</dbReference>
<dbReference type="Ensembl" id="ENSMUST00000098250.10">
    <molecule id="Q3USJ8-1"/>
    <property type="protein sequence ID" value="ENSMUSP00000095850.4"/>
    <property type="gene ID" value="ENSMUSG00000030691.16"/>
</dbReference>
<dbReference type="GeneID" id="207278"/>
<dbReference type="KEGG" id="mmu:207278"/>
<dbReference type="UCSC" id="uc009ioc.2">
    <molecule id="Q3USJ8-2"/>
    <property type="organism name" value="mouse"/>
</dbReference>
<dbReference type="UCSC" id="uc009iod.2">
    <molecule id="Q3USJ8-1"/>
    <property type="organism name" value="mouse"/>
</dbReference>
<dbReference type="AGR" id="MGI:2448475"/>
<dbReference type="CTD" id="9873"/>
<dbReference type="MGI" id="MGI:2448475">
    <property type="gene designation" value="Fchsd2"/>
</dbReference>
<dbReference type="VEuPathDB" id="HostDB:ENSMUSG00000030691"/>
<dbReference type="eggNOG" id="KOG3565">
    <property type="taxonomic scope" value="Eukaryota"/>
</dbReference>
<dbReference type="GeneTree" id="ENSGT00510000046732"/>
<dbReference type="HOGENOM" id="CLU_013546_0_0_1"/>
<dbReference type="InParanoid" id="Q3USJ8"/>
<dbReference type="OMA" id="TPMMEEP"/>
<dbReference type="OrthoDB" id="10065861at2759"/>
<dbReference type="PhylomeDB" id="Q3USJ8"/>
<dbReference type="TreeFam" id="TF324557"/>
<dbReference type="BioGRID-ORCS" id="207278">
    <property type="hits" value="1 hit in 77 CRISPR screens"/>
</dbReference>
<dbReference type="ChiTaRS" id="Fchsd2">
    <property type="organism name" value="mouse"/>
</dbReference>
<dbReference type="PRO" id="PR:Q3USJ8"/>
<dbReference type="Proteomes" id="UP000000589">
    <property type="component" value="Chromosome 7"/>
</dbReference>
<dbReference type="RNAct" id="Q3USJ8">
    <property type="molecule type" value="protein"/>
</dbReference>
<dbReference type="Bgee" id="ENSMUSG00000030691">
    <property type="expression patterns" value="Expressed in animal zygote and 224 other cell types or tissues"/>
</dbReference>
<dbReference type="ExpressionAtlas" id="Q3USJ8">
    <property type="expression patterns" value="baseline and differential"/>
</dbReference>
<dbReference type="GO" id="GO:0070161">
    <property type="term" value="C:anchoring junction"/>
    <property type="evidence" value="ECO:0007669"/>
    <property type="project" value="UniProtKB-SubCell"/>
</dbReference>
<dbReference type="GO" id="GO:0005905">
    <property type="term" value="C:clathrin-coated pit"/>
    <property type="evidence" value="ECO:0007669"/>
    <property type="project" value="UniProtKB-SubCell"/>
</dbReference>
<dbReference type="GO" id="GO:0005737">
    <property type="term" value="C:cytoplasm"/>
    <property type="evidence" value="ECO:0007669"/>
    <property type="project" value="UniProtKB-SubCell"/>
</dbReference>
<dbReference type="GO" id="GO:0005886">
    <property type="term" value="C:plasma membrane"/>
    <property type="evidence" value="ECO:0000250"/>
    <property type="project" value="UniProtKB"/>
</dbReference>
<dbReference type="GO" id="GO:0120043">
    <property type="term" value="C:stereocilium shaft"/>
    <property type="evidence" value="ECO:0000314"/>
    <property type="project" value="UniProtKB"/>
</dbReference>
<dbReference type="GO" id="GO:0005547">
    <property type="term" value="F:phosphatidylinositol-3,4,5-trisphosphate binding"/>
    <property type="evidence" value="ECO:0000250"/>
    <property type="project" value="UniProtKB"/>
</dbReference>
<dbReference type="GO" id="GO:0043325">
    <property type="term" value="F:phosphatidylinositol-3,4-bisphosphate binding"/>
    <property type="evidence" value="ECO:0000250"/>
    <property type="project" value="UniProtKB"/>
</dbReference>
<dbReference type="GO" id="GO:0072583">
    <property type="term" value="P:clathrin-dependent endocytosis"/>
    <property type="evidence" value="ECO:0000250"/>
    <property type="project" value="UniProtKB"/>
</dbReference>
<dbReference type="GO" id="GO:0061024">
    <property type="term" value="P:membrane organization"/>
    <property type="evidence" value="ECO:0000315"/>
    <property type="project" value="GO_Central"/>
</dbReference>
<dbReference type="GO" id="GO:0030838">
    <property type="term" value="P:positive regulation of actin filament polymerization"/>
    <property type="evidence" value="ECO:0000314"/>
    <property type="project" value="UniProtKB"/>
</dbReference>
<dbReference type="GO" id="GO:2000601">
    <property type="term" value="P:positive regulation of Arp2/3 complex-mediated actin nucleation"/>
    <property type="evidence" value="ECO:0000250"/>
    <property type="project" value="UniProtKB"/>
</dbReference>
<dbReference type="GO" id="GO:0015031">
    <property type="term" value="P:protein transport"/>
    <property type="evidence" value="ECO:0007669"/>
    <property type="project" value="UniProtKB-KW"/>
</dbReference>
<dbReference type="CDD" id="cd07677">
    <property type="entry name" value="F-BAR_FCHSD2"/>
    <property type="match status" value="1"/>
</dbReference>
<dbReference type="CDD" id="cd11894">
    <property type="entry name" value="SH3_FCHSD2_2"/>
    <property type="match status" value="1"/>
</dbReference>
<dbReference type="CDD" id="cd11761">
    <property type="entry name" value="SH3_FCHSD_1"/>
    <property type="match status" value="1"/>
</dbReference>
<dbReference type="FunFam" id="1.20.1270.60:FF:000026">
    <property type="entry name" value="FCH and double SH3 domains protein 2"/>
    <property type="match status" value="1"/>
</dbReference>
<dbReference type="FunFam" id="2.30.30.40:FF:000033">
    <property type="entry name" value="FCH and double SH3 domains protein 2"/>
    <property type="match status" value="1"/>
</dbReference>
<dbReference type="FunFam" id="2.30.30.40:FF:000060">
    <property type="entry name" value="FCH and double SH3 domains protein 2"/>
    <property type="match status" value="1"/>
</dbReference>
<dbReference type="Gene3D" id="1.20.1270.60">
    <property type="entry name" value="Arfaptin homology (AH) domain/BAR domain"/>
    <property type="match status" value="1"/>
</dbReference>
<dbReference type="Gene3D" id="2.30.30.40">
    <property type="entry name" value="SH3 Domains"/>
    <property type="match status" value="2"/>
</dbReference>
<dbReference type="InterPro" id="IPR027267">
    <property type="entry name" value="AH/BAR_dom_sf"/>
</dbReference>
<dbReference type="InterPro" id="IPR031160">
    <property type="entry name" value="F_BAR"/>
</dbReference>
<dbReference type="InterPro" id="IPR001060">
    <property type="entry name" value="FCH_dom"/>
</dbReference>
<dbReference type="InterPro" id="IPR034934">
    <property type="entry name" value="FCHSD2_F-BAR_dom"/>
</dbReference>
<dbReference type="InterPro" id="IPR035556">
    <property type="entry name" value="FCHSD2_SH3_2"/>
</dbReference>
<dbReference type="InterPro" id="IPR035460">
    <property type="entry name" value="FCHSD_SH3_1"/>
</dbReference>
<dbReference type="InterPro" id="IPR036028">
    <property type="entry name" value="SH3-like_dom_sf"/>
</dbReference>
<dbReference type="InterPro" id="IPR001452">
    <property type="entry name" value="SH3_domain"/>
</dbReference>
<dbReference type="PANTHER" id="PTHR15735:SF11">
    <property type="entry name" value="F-BAR AND DOUBLE SH3 DOMAINS PROTEIN 2"/>
    <property type="match status" value="1"/>
</dbReference>
<dbReference type="PANTHER" id="PTHR15735">
    <property type="entry name" value="FCH AND DOUBLE SH3 DOMAINS PROTEIN"/>
    <property type="match status" value="1"/>
</dbReference>
<dbReference type="Pfam" id="PF00611">
    <property type="entry name" value="FCH"/>
    <property type="match status" value="1"/>
</dbReference>
<dbReference type="Pfam" id="PF00018">
    <property type="entry name" value="SH3_1"/>
    <property type="match status" value="1"/>
</dbReference>
<dbReference type="Pfam" id="PF14604">
    <property type="entry name" value="SH3_9"/>
    <property type="match status" value="1"/>
</dbReference>
<dbReference type="PRINTS" id="PR00452">
    <property type="entry name" value="SH3DOMAIN"/>
</dbReference>
<dbReference type="SMART" id="SM00055">
    <property type="entry name" value="FCH"/>
    <property type="match status" value="1"/>
</dbReference>
<dbReference type="SMART" id="SM00326">
    <property type="entry name" value="SH3"/>
    <property type="match status" value="2"/>
</dbReference>
<dbReference type="SUPFAM" id="SSF103657">
    <property type="entry name" value="BAR/IMD domain-like"/>
    <property type="match status" value="1"/>
</dbReference>
<dbReference type="SUPFAM" id="SSF50044">
    <property type="entry name" value="SH3-domain"/>
    <property type="match status" value="2"/>
</dbReference>
<dbReference type="PROSITE" id="PS51741">
    <property type="entry name" value="F_BAR"/>
    <property type="match status" value="1"/>
</dbReference>
<dbReference type="PROSITE" id="PS50002">
    <property type="entry name" value="SH3"/>
    <property type="match status" value="2"/>
</dbReference>
<comment type="function">
    <text evidence="1 16">Adapter protein that plays a role in endocytosis via clathrin-coated pits. Contributes to the internalization of cell surface receptors, such as integrin ITGB1 and transferrin receptor. Promotes endocytosis of EGFR in cancer cells, and thereby contributes to the down-regulation of EGFR signaling. Recruited to clathrin-coated pits during a mid-to-late stage of assembly, where it is required for normal progress from U-shaped intermediate stage pits to terminal, omega-shaped pits. Binds to membranes enriched in phosphatidylinositol 3,4-bisphosphate or phosphatidylinositol 3,4,5-trisphosphate (By similarity). When bound to membranes, promotes actin polymerization via its interaction with WAS and/or WASL which leads to the activation of the Arp2/3 complex (PubMed:23437151). Does not promote actin polymerisation in the absence of membranes (By similarity).</text>
</comment>
<comment type="subunit">
    <text evidence="1 6 10 16">Homodimer (Probable). Interacts (via SH3 domain 2) with ITSN1 (via SH3 domain 4). Recruited to clathrin-coated pits during a mid-to-late stage of assembly via interaction with ITSN1 (By similarity). Interacts (via SH3 domain 1) with WASL (PubMed:23437151, PubMed:29887380). Interacts with WAS (PubMed:23437151). Interacts with CASK and MAGI1. CASK inhibits interaction with MAGI1 (By similarity).</text>
</comment>
<comment type="subcellular location">
    <subcellularLocation>
        <location evidence="16">Cytoplasm</location>
    </subcellularLocation>
    <subcellularLocation>
        <location evidence="1">Cell junction</location>
    </subcellularLocation>
    <subcellularLocation>
        <location evidence="1">Membrane</location>
        <location evidence="1">Clathrin-coated pit</location>
    </subcellularLocation>
    <subcellularLocation>
        <location evidence="1">Cell membrane</location>
        <topology evidence="1">Peripheral membrane protein</topology>
        <orientation evidence="1">Cytoplasmic side</orientation>
    </subcellularLocation>
    <subcellularLocation>
        <location evidence="6">Cell projection</location>
        <location evidence="6">Stereocilium</location>
    </subcellularLocation>
    <text evidence="1">Partially localized at clathrin-coated pits at the cell membrane. Detected at the cell membrane at sites around clathrin-coated pits, very close to the clathrin-coated pits but not an intrinsic part of the clathrin-coated pits. Colocalizes at cell-cell contacts with CDH1, but is not detected at tight junctions.</text>
</comment>
<comment type="alternative products">
    <event type="alternative splicing"/>
    <isoform>
        <id>Q3USJ8-1</id>
        <name>1</name>
        <sequence type="displayed"/>
    </isoform>
    <isoform>
        <id>Q3USJ8-2</id>
        <name>2</name>
        <sequence type="described" ref="VSP_023171"/>
    </isoform>
    <isoform>
        <id>Q3USJ8-3</id>
        <name>3</name>
        <sequence type="described" ref="VSP_023170 VSP_023171"/>
    </isoform>
</comment>
<comment type="tissue specificity">
    <text evidence="6">Detected in inner ear vestibula and in stereocilia in cochlear hair cell bundles (at protein level). Ubiquitous. Detected in testis, liver, brain cortex, cerebellum, kidney, organ of Corti, utricle, spiral ganglion, tongue and eye.</text>
</comment>
<comment type="developmental stage">
    <text evidence="8">Detected in brain cortex at 15.5 dpc and in neonates, but levels decrease 16.5 days after birth and are very low in adult brain cortex (at protein level).</text>
</comment>
<comment type="domain">
    <text evidence="1 7 9">The F-BAR domain has an atypical, flat shape and binds preferentially to flat membranes (By similarity). Upon heterologous expression, the isolated F-BAR domain is localized at the cell membrane, and causes the formation of cellular protrusions (PubMed:23761074, PubMed:26686642).</text>
</comment>
<comment type="domain">
    <text evidence="1">Recruited to clathrin-coated pits via SH3 domain 2.</text>
</comment>
<comment type="domain">
    <text evidence="17">The two SH3 domains cooperate to maintain the protein in an autoinhibited conformation that prevents promiscuous membrane binding.</text>
</comment>
<comment type="PTM">
    <text evidence="1">Phosphorylated. Phosphorylation on a Ser residue is important for recruitment to the cell membrane and for its role in promoting endocytosis.</text>
</comment>
<comment type="sequence caution" evidence="15">
    <conflict type="erroneous initiation">
        <sequence resource="EMBL-CDS" id="BAC65650"/>
    </conflict>
</comment>
<accession>Q3USJ8</accession>
<accession>Q3UQZ2</accession>
<accession>Q6P9R0</accession>
<accession>Q80TS2</accession>
<reference key="1">
    <citation type="journal article" date="2003" name="DNA Res.">
        <title>Prediction of the coding sequences of mouse homologues of KIAA gene: II. The complete nucleotide sequences of 400 mouse KIAA-homologous cDNAs identified by screening of terminal sequences of cDNA clones randomly sampled from size-fractionated libraries.</title>
        <authorList>
            <person name="Okazaki N."/>
            <person name="Kikuno R."/>
            <person name="Ohara R."/>
            <person name="Inamoto S."/>
            <person name="Aizawa H."/>
            <person name="Yuasa S."/>
            <person name="Nakajima D."/>
            <person name="Nagase T."/>
            <person name="Ohara O."/>
            <person name="Koga H."/>
        </authorList>
    </citation>
    <scope>NUCLEOTIDE SEQUENCE [LARGE SCALE MRNA] (ISOFORM 2)</scope>
    <source>
        <tissue>Brain</tissue>
    </source>
</reference>
<reference key="2">
    <citation type="journal article" date="2005" name="Science">
        <title>The transcriptional landscape of the mammalian genome.</title>
        <authorList>
            <person name="Carninci P."/>
            <person name="Kasukawa T."/>
            <person name="Katayama S."/>
            <person name="Gough J."/>
            <person name="Frith M.C."/>
            <person name="Maeda N."/>
            <person name="Oyama R."/>
            <person name="Ravasi T."/>
            <person name="Lenhard B."/>
            <person name="Wells C."/>
            <person name="Kodzius R."/>
            <person name="Shimokawa K."/>
            <person name="Bajic V.B."/>
            <person name="Brenner S.E."/>
            <person name="Batalov S."/>
            <person name="Forrest A.R."/>
            <person name="Zavolan M."/>
            <person name="Davis M.J."/>
            <person name="Wilming L.G."/>
            <person name="Aidinis V."/>
            <person name="Allen J.E."/>
            <person name="Ambesi-Impiombato A."/>
            <person name="Apweiler R."/>
            <person name="Aturaliya R.N."/>
            <person name="Bailey T.L."/>
            <person name="Bansal M."/>
            <person name="Baxter L."/>
            <person name="Beisel K.W."/>
            <person name="Bersano T."/>
            <person name="Bono H."/>
            <person name="Chalk A.M."/>
            <person name="Chiu K.P."/>
            <person name="Choudhary V."/>
            <person name="Christoffels A."/>
            <person name="Clutterbuck D.R."/>
            <person name="Crowe M.L."/>
            <person name="Dalla E."/>
            <person name="Dalrymple B.P."/>
            <person name="de Bono B."/>
            <person name="Della Gatta G."/>
            <person name="di Bernardo D."/>
            <person name="Down T."/>
            <person name="Engstrom P."/>
            <person name="Fagiolini M."/>
            <person name="Faulkner G."/>
            <person name="Fletcher C.F."/>
            <person name="Fukushima T."/>
            <person name="Furuno M."/>
            <person name="Futaki S."/>
            <person name="Gariboldi M."/>
            <person name="Georgii-Hemming P."/>
            <person name="Gingeras T.R."/>
            <person name="Gojobori T."/>
            <person name="Green R.E."/>
            <person name="Gustincich S."/>
            <person name="Harbers M."/>
            <person name="Hayashi Y."/>
            <person name="Hensch T.K."/>
            <person name="Hirokawa N."/>
            <person name="Hill D."/>
            <person name="Huminiecki L."/>
            <person name="Iacono M."/>
            <person name="Ikeo K."/>
            <person name="Iwama A."/>
            <person name="Ishikawa T."/>
            <person name="Jakt M."/>
            <person name="Kanapin A."/>
            <person name="Katoh M."/>
            <person name="Kawasawa Y."/>
            <person name="Kelso J."/>
            <person name="Kitamura H."/>
            <person name="Kitano H."/>
            <person name="Kollias G."/>
            <person name="Krishnan S.P."/>
            <person name="Kruger A."/>
            <person name="Kummerfeld S.K."/>
            <person name="Kurochkin I.V."/>
            <person name="Lareau L.F."/>
            <person name="Lazarevic D."/>
            <person name="Lipovich L."/>
            <person name="Liu J."/>
            <person name="Liuni S."/>
            <person name="McWilliam S."/>
            <person name="Madan Babu M."/>
            <person name="Madera M."/>
            <person name="Marchionni L."/>
            <person name="Matsuda H."/>
            <person name="Matsuzawa S."/>
            <person name="Miki H."/>
            <person name="Mignone F."/>
            <person name="Miyake S."/>
            <person name="Morris K."/>
            <person name="Mottagui-Tabar S."/>
            <person name="Mulder N."/>
            <person name="Nakano N."/>
            <person name="Nakauchi H."/>
            <person name="Ng P."/>
            <person name="Nilsson R."/>
            <person name="Nishiguchi S."/>
            <person name="Nishikawa S."/>
            <person name="Nori F."/>
            <person name="Ohara O."/>
            <person name="Okazaki Y."/>
            <person name="Orlando V."/>
            <person name="Pang K.C."/>
            <person name="Pavan W.J."/>
            <person name="Pavesi G."/>
            <person name="Pesole G."/>
            <person name="Petrovsky N."/>
            <person name="Piazza S."/>
            <person name="Reed J."/>
            <person name="Reid J.F."/>
            <person name="Ring B.Z."/>
            <person name="Ringwald M."/>
            <person name="Rost B."/>
            <person name="Ruan Y."/>
            <person name="Salzberg S.L."/>
            <person name="Sandelin A."/>
            <person name="Schneider C."/>
            <person name="Schoenbach C."/>
            <person name="Sekiguchi K."/>
            <person name="Semple C.A."/>
            <person name="Seno S."/>
            <person name="Sessa L."/>
            <person name="Sheng Y."/>
            <person name="Shibata Y."/>
            <person name="Shimada H."/>
            <person name="Shimada K."/>
            <person name="Silva D."/>
            <person name="Sinclair B."/>
            <person name="Sperling S."/>
            <person name="Stupka E."/>
            <person name="Sugiura K."/>
            <person name="Sultana R."/>
            <person name="Takenaka Y."/>
            <person name="Taki K."/>
            <person name="Tammoja K."/>
            <person name="Tan S.L."/>
            <person name="Tang S."/>
            <person name="Taylor M.S."/>
            <person name="Tegner J."/>
            <person name="Teichmann S.A."/>
            <person name="Ueda H.R."/>
            <person name="van Nimwegen E."/>
            <person name="Verardo R."/>
            <person name="Wei C.L."/>
            <person name="Yagi K."/>
            <person name="Yamanishi H."/>
            <person name="Zabarovsky E."/>
            <person name="Zhu S."/>
            <person name="Zimmer A."/>
            <person name="Hide W."/>
            <person name="Bult C."/>
            <person name="Grimmond S.M."/>
            <person name="Teasdale R.D."/>
            <person name="Liu E.T."/>
            <person name="Brusic V."/>
            <person name="Quackenbush J."/>
            <person name="Wahlestedt C."/>
            <person name="Mattick J.S."/>
            <person name="Hume D.A."/>
            <person name="Kai C."/>
            <person name="Sasaki D."/>
            <person name="Tomaru Y."/>
            <person name="Fukuda S."/>
            <person name="Kanamori-Katayama M."/>
            <person name="Suzuki M."/>
            <person name="Aoki J."/>
            <person name="Arakawa T."/>
            <person name="Iida J."/>
            <person name="Imamura K."/>
            <person name="Itoh M."/>
            <person name="Kato T."/>
            <person name="Kawaji H."/>
            <person name="Kawagashira N."/>
            <person name="Kawashima T."/>
            <person name="Kojima M."/>
            <person name="Kondo S."/>
            <person name="Konno H."/>
            <person name="Nakano K."/>
            <person name="Ninomiya N."/>
            <person name="Nishio T."/>
            <person name="Okada M."/>
            <person name="Plessy C."/>
            <person name="Shibata K."/>
            <person name="Shiraki T."/>
            <person name="Suzuki S."/>
            <person name="Tagami M."/>
            <person name="Waki K."/>
            <person name="Watahiki A."/>
            <person name="Okamura-Oho Y."/>
            <person name="Suzuki H."/>
            <person name="Kawai J."/>
            <person name="Hayashizaki Y."/>
        </authorList>
    </citation>
    <scope>NUCLEOTIDE SEQUENCE [LARGE SCALE MRNA] (ISOFORM 1)</scope>
    <source>
        <strain>C57BL/6J</strain>
        <tissue>Adipose tissue</tissue>
        <tissue>Spinal ganglion</tissue>
    </source>
</reference>
<reference key="3">
    <citation type="journal article" date="2004" name="Genome Res.">
        <title>The status, quality, and expansion of the NIH full-length cDNA project: the Mammalian Gene Collection (MGC).</title>
        <authorList>
            <consortium name="The MGC Project Team"/>
        </authorList>
    </citation>
    <scope>NUCLEOTIDE SEQUENCE [LARGE SCALE MRNA] (ISOFORM 3)</scope>
    <source>
        <strain>C57BL/6J</strain>
        <tissue>Brain</tissue>
    </source>
</reference>
<reference key="4">
    <citation type="journal article" date="2004" name="Int. J. Mol. Med.">
        <title>Identification and characterization of human FCHSD1 and FCHSD2 genes in silico.</title>
        <authorList>
            <person name="Katoh M."/>
            <person name="Katoh M."/>
        </authorList>
    </citation>
    <scope>IDENTIFICATION</scope>
</reference>
<reference key="5">
    <citation type="journal article" date="2007" name="Proc. Natl. Acad. Sci. U.S.A.">
        <title>Large-scale phosphorylation analysis of mouse liver.</title>
        <authorList>
            <person name="Villen J."/>
            <person name="Beausoleil S.A."/>
            <person name="Gerber S.A."/>
            <person name="Gygi S.P."/>
        </authorList>
    </citation>
    <scope>IDENTIFICATION BY MASS SPECTROMETRY [LARGE SCALE ANALYSIS]</scope>
    <source>
        <tissue>Liver</tissue>
    </source>
</reference>
<reference key="6">
    <citation type="journal article" date="2010" name="Cell">
        <title>A tissue-specific atlas of mouse protein phosphorylation and expression.</title>
        <authorList>
            <person name="Huttlin E.L."/>
            <person name="Jedrychowski M.P."/>
            <person name="Elias J.E."/>
            <person name="Goswami T."/>
            <person name="Rad R."/>
            <person name="Beausoleil S.A."/>
            <person name="Villen J."/>
            <person name="Haas W."/>
            <person name="Sowa M.E."/>
            <person name="Gygi S.P."/>
        </authorList>
    </citation>
    <scope>IDENTIFICATION BY MASS SPECTROMETRY [LARGE SCALE ANALYSIS]</scope>
    <source>
        <tissue>Kidney</tissue>
        <tissue>Spleen</tissue>
    </source>
</reference>
<reference key="7">
    <citation type="journal article" date="2013" name="Mol. Biol. Cell">
        <title>Formation of membrane ridges and scallops by the F-BAR protein Nervous Wreck.</title>
        <authorList>
            <person name="Becalska A.N."/>
            <person name="Kelley C.F."/>
            <person name="Berciu C."/>
            <person name="Stanishneva-Konovalova T.B."/>
            <person name="Fu X."/>
            <person name="Wang S."/>
            <person name="Sokolova O.S."/>
            <person name="Nicastro D."/>
            <person name="Rodal A.A."/>
        </authorList>
    </citation>
    <scope>DOMAIN</scope>
</reference>
<reference key="8">
    <citation type="journal article" date="2013" name="PLoS ONE">
        <title>FCHSD1 and FCHSD2 are expressed in hair cell stereocilia and cuticular plate and regulate actin polymerization in vitro.</title>
        <authorList>
            <person name="Cao H."/>
            <person name="Yin X."/>
            <person name="Cao Y."/>
            <person name="Jin Y."/>
            <person name="Wang S."/>
            <person name="Kong Y."/>
            <person name="Chen Y."/>
            <person name="Gao J."/>
            <person name="Heller S."/>
            <person name="Xu Z."/>
        </authorList>
    </citation>
    <scope>FUNCTION</scope>
    <scope>SUBCELLULAR LOCATION</scope>
    <scope>SUBUNIT</scope>
    <scope>INTERACTION WITH WAS AND WASL</scope>
    <scope>TISSUE SPECIFICITY</scope>
</reference>
<reference key="9">
    <citation type="journal article" date="2015" name="Cell Rep.">
        <title>Membrane Charge Directs the Outcome of F-BAR Domain Lipid Binding and Autoregulation.</title>
        <authorList>
            <person name="Kelley C.F."/>
            <person name="Messelaar E.M."/>
            <person name="Eskin T.L."/>
            <person name="Wang S."/>
            <person name="Song K."/>
            <person name="Vishnia K."/>
            <person name="Becalska A.N."/>
            <person name="Shupliakov O."/>
            <person name="Hagan M.F."/>
            <person name="Danino D."/>
            <person name="Sokolova O.S."/>
            <person name="Nicastro D."/>
            <person name="Rodal A.A."/>
        </authorList>
    </citation>
    <scope>DOMAIN</scope>
</reference>
<reference key="10">
    <citation type="journal article" date="2016" name="J. Cell Sci.">
        <title>BAR-SH3 sorting nexins are conserved interacting proteins of Nervous wreck that organize synapses and promote neurotransmission.</title>
        <authorList>
            <person name="Ukken F.P."/>
            <person name="Bruckner J.J."/>
            <person name="Weir K.L."/>
            <person name="Hope S.J."/>
            <person name="Sison S.L."/>
            <person name="Birschbach R.M."/>
            <person name="Hicks L."/>
            <person name="Taylor K.L."/>
            <person name="Dent E.W."/>
            <person name="Gonsalvez G.B."/>
            <person name="O'Connor-Giles K.M."/>
        </authorList>
    </citation>
    <scope>DEVELOPMENTAL STAGE</scope>
</reference>
<reference key="11">
    <citation type="journal article" date="2018" name="Cell">
        <title>A Flat BAR Protein Promotes Actin Polymerization at the Base of Clathrin-Coated Pits.</title>
        <authorList>
            <person name="Almeida-Souza L."/>
            <person name="Frank R.A.W."/>
            <person name="Garcia-Nafria J."/>
            <person name="Colussi A."/>
            <person name="Gunawardana N."/>
            <person name="Johnson C.M."/>
            <person name="Yu M."/>
            <person name="Howard G."/>
            <person name="Andrews B."/>
            <person name="Vallis Y."/>
            <person name="McMahon H.T."/>
        </authorList>
    </citation>
    <scope>INTERACTION WITH WASL</scope>
</reference>
<gene>
    <name type="primary">Fchsd2</name>
    <name type="synonym">Kiaa0769</name>
    <name type="synonym">Sh3md3</name>
</gene>
<organism>
    <name type="scientific">Mus musculus</name>
    <name type="common">Mouse</name>
    <dbReference type="NCBI Taxonomy" id="10090"/>
    <lineage>
        <taxon>Eukaryota</taxon>
        <taxon>Metazoa</taxon>
        <taxon>Chordata</taxon>
        <taxon>Craniata</taxon>
        <taxon>Vertebrata</taxon>
        <taxon>Euteleostomi</taxon>
        <taxon>Mammalia</taxon>
        <taxon>Eutheria</taxon>
        <taxon>Euarchontoglires</taxon>
        <taxon>Glires</taxon>
        <taxon>Rodentia</taxon>
        <taxon>Myomorpha</taxon>
        <taxon>Muroidea</taxon>
        <taxon>Muridae</taxon>
        <taxon>Murinae</taxon>
        <taxon>Mus</taxon>
        <taxon>Mus</taxon>
    </lineage>
</organism>
<evidence type="ECO:0000250" key="1">
    <source>
        <dbReference type="UniProtKB" id="O94868"/>
    </source>
</evidence>
<evidence type="ECO:0000255" key="2"/>
<evidence type="ECO:0000255" key="3">
    <source>
        <dbReference type="PROSITE-ProRule" id="PRU00192"/>
    </source>
</evidence>
<evidence type="ECO:0000255" key="4">
    <source>
        <dbReference type="PROSITE-ProRule" id="PRU01077"/>
    </source>
</evidence>
<evidence type="ECO:0000256" key="5">
    <source>
        <dbReference type="SAM" id="MobiDB-lite"/>
    </source>
</evidence>
<evidence type="ECO:0000269" key="6">
    <source>
    </source>
</evidence>
<evidence type="ECO:0000269" key="7">
    <source>
    </source>
</evidence>
<evidence type="ECO:0000269" key="8">
    <source>
    </source>
</evidence>
<evidence type="ECO:0000269" key="9">
    <source>
    </source>
</evidence>
<evidence type="ECO:0000269" key="10">
    <source>
    </source>
</evidence>
<evidence type="ECO:0000303" key="11">
    <source>
    </source>
</evidence>
<evidence type="ECO:0000303" key="12">
    <source>
    </source>
</evidence>
<evidence type="ECO:0000303" key="13">
    <source>
    </source>
</evidence>
<evidence type="ECO:0000303" key="14">
    <source>
    </source>
</evidence>
<evidence type="ECO:0000305" key="15"/>
<evidence type="ECO:0000305" key="16">
    <source>
    </source>
</evidence>
<evidence type="ECO:0000305" key="17">
    <source>
    </source>
</evidence>
<evidence type="ECO:0007829" key="18">
    <source>
        <dbReference type="PDB" id="7WEG"/>
    </source>
</evidence>